<sequence>MTMSHASPDAARSRIVLASNNPGKLREFAALFSTAGIDIVPQGELGVSEADEPHATFVENALAKARHASRATGLPAVADDSGLCVPALLGAPGVYSARYAQRAGREKSDAANNAYLVEQLREVADRRAYYYCVLALVRHADDPEPLIAEGRWAGEIVDAPRGAHGFGYDPHFFVPALGATAAELDPAAKNAASHRALALKALVARLGEIR</sequence>
<name>IXTPA_BURMA</name>
<protein>
    <recommendedName>
        <fullName evidence="1">dITP/XTP pyrophosphatase</fullName>
        <ecNumber evidence="1">3.6.1.66</ecNumber>
    </recommendedName>
    <alternativeName>
        <fullName evidence="1">Non-canonical purine NTP pyrophosphatase</fullName>
    </alternativeName>
    <alternativeName>
        <fullName evidence="1">Non-standard purine NTP pyrophosphatase</fullName>
    </alternativeName>
    <alternativeName>
        <fullName evidence="1">Nucleoside-triphosphate diphosphatase</fullName>
    </alternativeName>
    <alternativeName>
        <fullName evidence="1">Nucleoside-triphosphate pyrophosphatase</fullName>
        <shortName evidence="1">NTPase</shortName>
    </alternativeName>
</protein>
<reference key="1">
    <citation type="journal article" date="2004" name="Proc. Natl. Acad. Sci. U.S.A.">
        <title>Structural flexibility in the Burkholderia mallei genome.</title>
        <authorList>
            <person name="Nierman W.C."/>
            <person name="DeShazer D."/>
            <person name="Kim H.S."/>
            <person name="Tettelin H."/>
            <person name="Nelson K.E."/>
            <person name="Feldblyum T.V."/>
            <person name="Ulrich R.L."/>
            <person name="Ronning C.M."/>
            <person name="Brinkac L.M."/>
            <person name="Daugherty S.C."/>
            <person name="Davidsen T.D."/>
            <person name="DeBoy R.T."/>
            <person name="Dimitrov G."/>
            <person name="Dodson R.J."/>
            <person name="Durkin A.S."/>
            <person name="Gwinn M.L."/>
            <person name="Haft D.H."/>
            <person name="Khouri H.M."/>
            <person name="Kolonay J.F."/>
            <person name="Madupu R."/>
            <person name="Mohammoud Y."/>
            <person name="Nelson W.C."/>
            <person name="Radune D."/>
            <person name="Romero C.M."/>
            <person name="Sarria S."/>
            <person name="Selengut J."/>
            <person name="Shamblin C."/>
            <person name="Sullivan S.A."/>
            <person name="White O."/>
            <person name="Yu Y."/>
            <person name="Zafar N."/>
            <person name="Zhou L."/>
            <person name="Fraser C.M."/>
        </authorList>
    </citation>
    <scope>NUCLEOTIDE SEQUENCE [LARGE SCALE GENOMIC DNA]</scope>
    <source>
        <strain>ATCC 23344</strain>
    </source>
</reference>
<accession>Q62HZ7</accession>
<gene>
    <name type="ordered locus">BMA2099</name>
</gene>
<dbReference type="EC" id="3.6.1.66" evidence="1"/>
<dbReference type="EMBL" id="CP000010">
    <property type="protein sequence ID" value="AAU50021.1"/>
    <property type="molecule type" value="Genomic_DNA"/>
</dbReference>
<dbReference type="RefSeq" id="YP_103673.1">
    <property type="nucleotide sequence ID" value="NC_006348.1"/>
</dbReference>
<dbReference type="SMR" id="Q62HZ7"/>
<dbReference type="KEGG" id="bma:BMA2099"/>
<dbReference type="PATRIC" id="fig|243160.12.peg.2167"/>
<dbReference type="eggNOG" id="COG0127">
    <property type="taxonomic scope" value="Bacteria"/>
</dbReference>
<dbReference type="HOGENOM" id="CLU_082080_0_3_4"/>
<dbReference type="Proteomes" id="UP000006693">
    <property type="component" value="Chromosome 1"/>
</dbReference>
<dbReference type="GO" id="GO:0005829">
    <property type="term" value="C:cytosol"/>
    <property type="evidence" value="ECO:0007669"/>
    <property type="project" value="TreeGrafter"/>
</dbReference>
<dbReference type="GO" id="GO:0035870">
    <property type="term" value="F:dITP diphosphatase activity"/>
    <property type="evidence" value="ECO:0007669"/>
    <property type="project" value="RHEA"/>
</dbReference>
<dbReference type="GO" id="GO:0036220">
    <property type="term" value="F:ITP diphosphatase activity"/>
    <property type="evidence" value="ECO:0007669"/>
    <property type="project" value="UniProtKB-EC"/>
</dbReference>
<dbReference type="GO" id="GO:0046872">
    <property type="term" value="F:metal ion binding"/>
    <property type="evidence" value="ECO:0007669"/>
    <property type="project" value="UniProtKB-KW"/>
</dbReference>
<dbReference type="GO" id="GO:0000166">
    <property type="term" value="F:nucleotide binding"/>
    <property type="evidence" value="ECO:0007669"/>
    <property type="project" value="UniProtKB-KW"/>
</dbReference>
<dbReference type="GO" id="GO:0017111">
    <property type="term" value="F:ribonucleoside triphosphate phosphatase activity"/>
    <property type="evidence" value="ECO:0007669"/>
    <property type="project" value="InterPro"/>
</dbReference>
<dbReference type="GO" id="GO:0036222">
    <property type="term" value="F:XTP diphosphatase activity"/>
    <property type="evidence" value="ECO:0007669"/>
    <property type="project" value="RHEA"/>
</dbReference>
<dbReference type="GO" id="GO:0009117">
    <property type="term" value="P:nucleotide metabolic process"/>
    <property type="evidence" value="ECO:0007669"/>
    <property type="project" value="UniProtKB-KW"/>
</dbReference>
<dbReference type="GO" id="GO:0009146">
    <property type="term" value="P:purine nucleoside triphosphate catabolic process"/>
    <property type="evidence" value="ECO:0007669"/>
    <property type="project" value="UniProtKB-UniRule"/>
</dbReference>
<dbReference type="CDD" id="cd00515">
    <property type="entry name" value="HAM1"/>
    <property type="match status" value="1"/>
</dbReference>
<dbReference type="FunFam" id="3.90.950.10:FF:000001">
    <property type="entry name" value="dITP/XTP pyrophosphatase"/>
    <property type="match status" value="1"/>
</dbReference>
<dbReference type="Gene3D" id="3.90.950.10">
    <property type="match status" value="1"/>
</dbReference>
<dbReference type="HAMAP" id="MF_01405">
    <property type="entry name" value="Non_canon_purine_NTPase"/>
    <property type="match status" value="1"/>
</dbReference>
<dbReference type="InterPro" id="IPR020922">
    <property type="entry name" value="dITP/XTP_pyrophosphatase"/>
</dbReference>
<dbReference type="InterPro" id="IPR029001">
    <property type="entry name" value="ITPase-like_fam"/>
</dbReference>
<dbReference type="InterPro" id="IPR002637">
    <property type="entry name" value="RdgB/HAM1"/>
</dbReference>
<dbReference type="NCBIfam" id="TIGR00042">
    <property type="entry name" value="RdgB/HAM1 family non-canonical purine NTP pyrophosphatase"/>
    <property type="match status" value="1"/>
</dbReference>
<dbReference type="PANTHER" id="PTHR11067:SF9">
    <property type="entry name" value="INOSINE TRIPHOSPHATE PYROPHOSPHATASE"/>
    <property type="match status" value="1"/>
</dbReference>
<dbReference type="PANTHER" id="PTHR11067">
    <property type="entry name" value="INOSINE TRIPHOSPHATE PYROPHOSPHATASE/HAM1 PROTEIN"/>
    <property type="match status" value="1"/>
</dbReference>
<dbReference type="Pfam" id="PF01725">
    <property type="entry name" value="Ham1p_like"/>
    <property type="match status" value="1"/>
</dbReference>
<dbReference type="SUPFAM" id="SSF52972">
    <property type="entry name" value="ITPase-like"/>
    <property type="match status" value="1"/>
</dbReference>
<keyword id="KW-0378">Hydrolase</keyword>
<keyword id="KW-0460">Magnesium</keyword>
<keyword id="KW-0479">Metal-binding</keyword>
<keyword id="KW-0546">Nucleotide metabolism</keyword>
<keyword id="KW-0547">Nucleotide-binding</keyword>
<keyword id="KW-1185">Reference proteome</keyword>
<feature type="chain" id="PRO_0000178143" description="dITP/XTP pyrophosphatase">
    <location>
        <begin position="1"/>
        <end position="210"/>
    </location>
</feature>
<feature type="active site" description="Proton acceptor" evidence="1">
    <location>
        <position position="80"/>
    </location>
</feature>
<feature type="binding site" evidence="1">
    <location>
        <begin position="19"/>
        <end position="24"/>
    </location>
    <ligand>
        <name>substrate</name>
    </ligand>
</feature>
<feature type="binding site" evidence="1">
    <location>
        <position position="51"/>
    </location>
    <ligand>
        <name>Mg(2+)</name>
        <dbReference type="ChEBI" id="CHEBI:18420"/>
    </ligand>
</feature>
<feature type="binding site" evidence="1">
    <location>
        <position position="80"/>
    </location>
    <ligand>
        <name>Mg(2+)</name>
        <dbReference type="ChEBI" id="CHEBI:18420"/>
    </ligand>
</feature>
<feature type="binding site" evidence="1">
    <location>
        <position position="81"/>
    </location>
    <ligand>
        <name>substrate</name>
    </ligand>
</feature>
<feature type="binding site" evidence="1">
    <location>
        <begin position="166"/>
        <end position="169"/>
    </location>
    <ligand>
        <name>substrate</name>
    </ligand>
</feature>
<feature type="binding site" evidence="1">
    <location>
        <position position="189"/>
    </location>
    <ligand>
        <name>substrate</name>
    </ligand>
</feature>
<feature type="binding site" evidence="1">
    <location>
        <begin position="194"/>
        <end position="195"/>
    </location>
    <ligand>
        <name>substrate</name>
    </ligand>
</feature>
<proteinExistence type="inferred from homology"/>
<organism>
    <name type="scientific">Burkholderia mallei (strain ATCC 23344)</name>
    <dbReference type="NCBI Taxonomy" id="243160"/>
    <lineage>
        <taxon>Bacteria</taxon>
        <taxon>Pseudomonadati</taxon>
        <taxon>Pseudomonadota</taxon>
        <taxon>Betaproteobacteria</taxon>
        <taxon>Burkholderiales</taxon>
        <taxon>Burkholderiaceae</taxon>
        <taxon>Burkholderia</taxon>
        <taxon>pseudomallei group</taxon>
    </lineage>
</organism>
<comment type="function">
    <text evidence="1">Pyrophosphatase that catalyzes the hydrolysis of nucleoside triphosphates to their monophosphate derivatives, with a high preference for the non-canonical purine nucleotides XTP (xanthosine triphosphate), dITP (deoxyinosine triphosphate) and ITP. Seems to function as a house-cleaning enzyme that removes non-canonical purine nucleotides from the nucleotide pool, thus preventing their incorporation into DNA/RNA and avoiding chromosomal lesions.</text>
</comment>
<comment type="catalytic activity">
    <reaction evidence="1">
        <text>XTP + H2O = XMP + diphosphate + H(+)</text>
        <dbReference type="Rhea" id="RHEA:28610"/>
        <dbReference type="ChEBI" id="CHEBI:15377"/>
        <dbReference type="ChEBI" id="CHEBI:15378"/>
        <dbReference type="ChEBI" id="CHEBI:33019"/>
        <dbReference type="ChEBI" id="CHEBI:57464"/>
        <dbReference type="ChEBI" id="CHEBI:61314"/>
        <dbReference type="EC" id="3.6.1.66"/>
    </reaction>
</comment>
<comment type="catalytic activity">
    <reaction evidence="1">
        <text>dITP + H2O = dIMP + diphosphate + H(+)</text>
        <dbReference type="Rhea" id="RHEA:28342"/>
        <dbReference type="ChEBI" id="CHEBI:15377"/>
        <dbReference type="ChEBI" id="CHEBI:15378"/>
        <dbReference type="ChEBI" id="CHEBI:33019"/>
        <dbReference type="ChEBI" id="CHEBI:61194"/>
        <dbReference type="ChEBI" id="CHEBI:61382"/>
        <dbReference type="EC" id="3.6.1.66"/>
    </reaction>
</comment>
<comment type="catalytic activity">
    <reaction evidence="1">
        <text>ITP + H2O = IMP + diphosphate + H(+)</text>
        <dbReference type="Rhea" id="RHEA:29399"/>
        <dbReference type="ChEBI" id="CHEBI:15377"/>
        <dbReference type="ChEBI" id="CHEBI:15378"/>
        <dbReference type="ChEBI" id="CHEBI:33019"/>
        <dbReference type="ChEBI" id="CHEBI:58053"/>
        <dbReference type="ChEBI" id="CHEBI:61402"/>
        <dbReference type="EC" id="3.6.1.66"/>
    </reaction>
</comment>
<comment type="cofactor">
    <cofactor evidence="1">
        <name>Mg(2+)</name>
        <dbReference type="ChEBI" id="CHEBI:18420"/>
    </cofactor>
    <text evidence="1">Binds 1 Mg(2+) ion per subunit.</text>
</comment>
<comment type="subunit">
    <text evidence="1">Homodimer.</text>
</comment>
<comment type="similarity">
    <text evidence="1">Belongs to the HAM1 NTPase family.</text>
</comment>
<evidence type="ECO:0000255" key="1">
    <source>
        <dbReference type="HAMAP-Rule" id="MF_01405"/>
    </source>
</evidence>